<protein>
    <recommendedName>
        <fullName>Tubby-related protein 2</fullName>
    </recommendedName>
    <alternativeName>
        <fullName>Cancer/testis antigen 65</fullName>
        <shortName>CT65</shortName>
    </alternativeName>
    <alternativeName>
        <fullName>Tubby-like protein 2</fullName>
    </alternativeName>
</protein>
<gene>
    <name type="primary">TULP2</name>
    <name type="synonym">TUBL2</name>
</gene>
<proteinExistence type="evidence at protein level"/>
<keyword id="KW-0963">Cytoplasm</keyword>
<keyword id="KW-0597">Phosphoprotein</keyword>
<keyword id="KW-1267">Proteomics identification</keyword>
<keyword id="KW-1185">Reference proteome</keyword>
<keyword id="KW-0964">Secreted</keyword>
<sequence>MSQDNDTLMRDILGHELAAMRLQKLEQQRRLFEKKQRQKRQELLMVQANPDASPWLWRSCLREERLLGDRGLGNPFLRKKVSEAHLPSGIHSALGTVSCGGDGRGERGLPTPRTEAVFRNLGLQSPFLSWLPDNSDAELEEVSVENGSVSPPPFKQSPRIRRKGWQAHQRPGTRAEGESDSQDMGDAHKSPNMGPNPGMDGDCVYENLAFQKEEDLEKKREASESTGTNSSAAHNEELSKALKGEGGTDSDHMRHEASLAIRSPCPGLEEDMEAYVLRPALPGTMMQCYLTRDKHGVDKGLFPLYYLYLETSDSLQRFLLAGRKRRRSKTSNYLISLDPTHLSRDGDNFVGKVRSNVFSTKFTIFDNGVNPDREHLTRNTARIRQELGAVCYEPNVLGYLGPRKMTVILPGTNSQNQRINVQPLNEQESLLSRYQRGDKQGLLLLHNKTPSWDKENGVYTLNFHGRVTRASVKNFQIVDPKHQEHLVLQFGRVGPDTFTMDFCFPFSPLQAFSICLSSFN</sequence>
<evidence type="ECO:0000250" key="1"/>
<evidence type="ECO:0000250" key="2">
    <source>
        <dbReference type="UniProtKB" id="P46686"/>
    </source>
</evidence>
<evidence type="ECO:0000256" key="3">
    <source>
        <dbReference type="SAM" id="MobiDB-lite"/>
    </source>
</evidence>
<evidence type="ECO:0000269" key="4">
    <source>
    </source>
</evidence>
<evidence type="ECO:0000269" key="5">
    <source>
    </source>
</evidence>
<evidence type="ECO:0000269" key="6">
    <source>
    </source>
</evidence>
<evidence type="ECO:0000305" key="7"/>
<organism>
    <name type="scientific">Homo sapiens</name>
    <name type="common">Human</name>
    <dbReference type="NCBI Taxonomy" id="9606"/>
    <lineage>
        <taxon>Eukaryota</taxon>
        <taxon>Metazoa</taxon>
        <taxon>Chordata</taxon>
        <taxon>Craniata</taxon>
        <taxon>Vertebrata</taxon>
        <taxon>Euteleostomi</taxon>
        <taxon>Mammalia</taxon>
        <taxon>Eutheria</taxon>
        <taxon>Euarchontoglires</taxon>
        <taxon>Primates</taxon>
        <taxon>Haplorrhini</taxon>
        <taxon>Catarrhini</taxon>
        <taxon>Hominidae</taxon>
        <taxon>Homo</taxon>
    </lineage>
</organism>
<dbReference type="EMBL" id="U82469">
    <property type="protein sequence ID" value="AAB53701.1"/>
    <property type="molecule type" value="mRNA"/>
</dbReference>
<dbReference type="EMBL" id="CH471177">
    <property type="protein sequence ID" value="EAW52410.1"/>
    <property type="molecule type" value="Genomic_DNA"/>
</dbReference>
<dbReference type="EMBL" id="BC026070">
    <property type="protein sequence ID" value="AAH26070.1"/>
    <property type="molecule type" value="mRNA"/>
</dbReference>
<dbReference type="CCDS" id="CCDS12739.1"/>
<dbReference type="RefSeq" id="NP_003314.2">
    <property type="nucleotide sequence ID" value="NM_003323.3"/>
</dbReference>
<dbReference type="SMR" id="O00295"/>
<dbReference type="BioGRID" id="113139">
    <property type="interactions" value="38"/>
</dbReference>
<dbReference type="FunCoup" id="O00295">
    <property type="interactions" value="32"/>
</dbReference>
<dbReference type="IntAct" id="O00295">
    <property type="interactions" value="34"/>
</dbReference>
<dbReference type="STRING" id="9606.ENSP00000221399"/>
<dbReference type="iPTMnet" id="O00295"/>
<dbReference type="PhosphoSitePlus" id="O00295"/>
<dbReference type="BioMuta" id="TULP2"/>
<dbReference type="MassIVE" id="O00295"/>
<dbReference type="PaxDb" id="9606-ENSP00000221399"/>
<dbReference type="PeptideAtlas" id="O00295"/>
<dbReference type="ProteomicsDB" id="47827"/>
<dbReference type="Antibodypedia" id="31829">
    <property type="antibodies" value="187 antibodies from 25 providers"/>
</dbReference>
<dbReference type="DNASU" id="7288"/>
<dbReference type="Ensembl" id="ENST00000221399.8">
    <property type="protein sequence ID" value="ENSP00000221399.3"/>
    <property type="gene ID" value="ENSG00000104804.9"/>
</dbReference>
<dbReference type="GeneID" id="7288"/>
<dbReference type="KEGG" id="hsa:7288"/>
<dbReference type="MANE-Select" id="ENST00000221399.8">
    <property type="protein sequence ID" value="ENSP00000221399.3"/>
    <property type="RefSeq nucleotide sequence ID" value="NM_003323.3"/>
    <property type="RefSeq protein sequence ID" value="NP_003314.2"/>
</dbReference>
<dbReference type="UCSC" id="uc002pkz.3">
    <property type="organism name" value="human"/>
</dbReference>
<dbReference type="AGR" id="HGNC:12424"/>
<dbReference type="CTD" id="7288"/>
<dbReference type="DisGeNET" id="7288"/>
<dbReference type="GeneCards" id="TULP2"/>
<dbReference type="HGNC" id="HGNC:12424">
    <property type="gene designation" value="TULP2"/>
</dbReference>
<dbReference type="HPA" id="ENSG00000104804">
    <property type="expression patterns" value="Tissue enriched (testis)"/>
</dbReference>
<dbReference type="MIM" id="602309">
    <property type="type" value="gene"/>
</dbReference>
<dbReference type="neXtProt" id="NX_O00295"/>
<dbReference type="OpenTargets" id="ENSG00000104804"/>
<dbReference type="PharmGKB" id="PA37086"/>
<dbReference type="VEuPathDB" id="HostDB:ENSG00000104804"/>
<dbReference type="eggNOG" id="KOG2502">
    <property type="taxonomic scope" value="Eukaryota"/>
</dbReference>
<dbReference type="GeneTree" id="ENSGT00940000161908"/>
<dbReference type="HOGENOM" id="CLU_028236_1_0_1"/>
<dbReference type="InParanoid" id="O00295"/>
<dbReference type="OMA" id="HNKTPSW"/>
<dbReference type="OrthoDB" id="8775810at2759"/>
<dbReference type="PAN-GO" id="O00295">
    <property type="GO annotations" value="2 GO annotations based on evolutionary models"/>
</dbReference>
<dbReference type="PhylomeDB" id="O00295"/>
<dbReference type="TreeFam" id="TF314076"/>
<dbReference type="PathwayCommons" id="O00295"/>
<dbReference type="SignaLink" id="O00295"/>
<dbReference type="BioGRID-ORCS" id="7288">
    <property type="hits" value="19 hits in 1169 CRISPR screens"/>
</dbReference>
<dbReference type="GenomeRNAi" id="7288"/>
<dbReference type="Pharos" id="O00295">
    <property type="development level" value="Tbio"/>
</dbReference>
<dbReference type="PRO" id="PR:O00295"/>
<dbReference type="Proteomes" id="UP000005640">
    <property type="component" value="Chromosome 19"/>
</dbReference>
<dbReference type="RNAct" id="O00295">
    <property type="molecule type" value="protein"/>
</dbReference>
<dbReference type="Bgee" id="ENSG00000104804">
    <property type="expression patterns" value="Expressed in sperm and 97 other cell types or tissues"/>
</dbReference>
<dbReference type="ExpressionAtlas" id="O00295">
    <property type="expression patterns" value="baseline and differential"/>
</dbReference>
<dbReference type="GO" id="GO:0005929">
    <property type="term" value="C:cilium"/>
    <property type="evidence" value="ECO:0000318"/>
    <property type="project" value="GO_Central"/>
</dbReference>
<dbReference type="GO" id="GO:0005737">
    <property type="term" value="C:cytoplasm"/>
    <property type="evidence" value="ECO:0007669"/>
    <property type="project" value="UniProtKB-SubCell"/>
</dbReference>
<dbReference type="GO" id="GO:0005576">
    <property type="term" value="C:extracellular region"/>
    <property type="evidence" value="ECO:0007669"/>
    <property type="project" value="UniProtKB-SubCell"/>
</dbReference>
<dbReference type="GO" id="GO:0044877">
    <property type="term" value="F:protein-containing complex binding"/>
    <property type="evidence" value="ECO:0000314"/>
    <property type="project" value="MGI"/>
</dbReference>
<dbReference type="GO" id="GO:0061512">
    <property type="term" value="P:protein localization to cilium"/>
    <property type="evidence" value="ECO:0000318"/>
    <property type="project" value="GO_Central"/>
</dbReference>
<dbReference type="GO" id="GO:0007601">
    <property type="term" value="P:visual perception"/>
    <property type="evidence" value="ECO:0000304"/>
    <property type="project" value="ProtInc"/>
</dbReference>
<dbReference type="Gene3D" id="3.20.90.10">
    <property type="entry name" value="Tubby Protein, Chain A"/>
    <property type="match status" value="1"/>
</dbReference>
<dbReference type="InterPro" id="IPR025659">
    <property type="entry name" value="Tubby-like_C"/>
</dbReference>
<dbReference type="InterPro" id="IPR000007">
    <property type="entry name" value="Tubby_C"/>
</dbReference>
<dbReference type="InterPro" id="IPR018066">
    <property type="entry name" value="Tubby_C_CS"/>
</dbReference>
<dbReference type="InterPro" id="IPR005398">
    <property type="entry name" value="Tubby_N"/>
</dbReference>
<dbReference type="PANTHER" id="PTHR16517">
    <property type="entry name" value="TUBBY-RELATED"/>
    <property type="match status" value="1"/>
</dbReference>
<dbReference type="PANTHER" id="PTHR16517:SF24">
    <property type="entry name" value="TUBBY-RELATED PROTEIN 2"/>
    <property type="match status" value="1"/>
</dbReference>
<dbReference type="Pfam" id="PF01167">
    <property type="entry name" value="Tub"/>
    <property type="match status" value="1"/>
</dbReference>
<dbReference type="Pfam" id="PF16322">
    <property type="entry name" value="Tub_N"/>
    <property type="match status" value="1"/>
</dbReference>
<dbReference type="PRINTS" id="PR01573">
    <property type="entry name" value="SUPERTUBBY"/>
</dbReference>
<dbReference type="PRINTS" id="PR01574">
    <property type="entry name" value="TUBBYPROTEIN"/>
</dbReference>
<dbReference type="SUPFAM" id="SSF54518">
    <property type="entry name" value="Tubby C-terminal domain-like"/>
    <property type="match status" value="1"/>
</dbReference>
<dbReference type="PROSITE" id="PS01200">
    <property type="entry name" value="TUB_1"/>
    <property type="match status" value="1"/>
</dbReference>
<comment type="subcellular location">
    <subcellularLocation>
        <location evidence="1">Cytoplasm</location>
    </subcellularLocation>
    <subcellularLocation>
        <location evidence="1">Secreted</location>
    </subcellularLocation>
    <text evidence="1">Does not have a cleavable signal peptide and is secreted by a non-conventional pathway.</text>
</comment>
<comment type="tissue specificity">
    <text evidence="4 6">Strongly expressed in testis. Also expressed in retina. Expressed in cancer cell lines.</text>
</comment>
<comment type="similarity">
    <text evidence="7">Belongs to the TUB family.</text>
</comment>
<reference key="1">
    <citation type="journal article" date="1997" name="Proc. Natl. Acad. Sci. U.S.A.">
        <title>Molecular characterization of TUB, TULP1, and TULP2, members of the novel tubby gene family and their possible relation to ocular diseases.</title>
        <authorList>
            <person name="North M.A."/>
            <person name="Naggert J.K."/>
            <person name="Yan Y."/>
            <person name="Noben-Trauth K."/>
            <person name="Nishina P.M."/>
        </authorList>
    </citation>
    <scope>NUCLEOTIDE SEQUENCE [MRNA]</scope>
    <scope>TISSUE SPECIFICITY</scope>
    <source>
        <tissue>Brain</tissue>
    </source>
</reference>
<reference key="2">
    <citation type="submission" date="2005-07" db="EMBL/GenBank/DDBJ databases">
        <authorList>
            <person name="Mural R.J."/>
            <person name="Istrail S."/>
            <person name="Sutton G.G."/>
            <person name="Florea L."/>
            <person name="Halpern A.L."/>
            <person name="Mobarry C.M."/>
            <person name="Lippert R."/>
            <person name="Walenz B."/>
            <person name="Shatkay H."/>
            <person name="Dew I."/>
            <person name="Miller J.R."/>
            <person name="Flanigan M.J."/>
            <person name="Edwards N.J."/>
            <person name="Bolanos R."/>
            <person name="Fasulo D."/>
            <person name="Halldorsson B.V."/>
            <person name="Hannenhalli S."/>
            <person name="Turner R."/>
            <person name="Yooseph S."/>
            <person name="Lu F."/>
            <person name="Nusskern D.R."/>
            <person name="Shue B.C."/>
            <person name="Zheng X.H."/>
            <person name="Zhong F."/>
            <person name="Delcher A.L."/>
            <person name="Huson D.H."/>
            <person name="Kravitz S.A."/>
            <person name="Mouchard L."/>
            <person name="Reinert K."/>
            <person name="Remington K.A."/>
            <person name="Clark A.G."/>
            <person name="Waterman M.S."/>
            <person name="Eichler E.E."/>
            <person name="Adams M.D."/>
            <person name="Hunkapiller M.W."/>
            <person name="Myers E.W."/>
            <person name="Venter J.C."/>
        </authorList>
    </citation>
    <scope>NUCLEOTIDE SEQUENCE [LARGE SCALE GENOMIC DNA]</scope>
</reference>
<reference key="3">
    <citation type="journal article" date="2004" name="Genome Res.">
        <title>The status, quality, and expansion of the NIH full-length cDNA project: the Mammalian Gene Collection (MGC).</title>
        <authorList>
            <consortium name="The MGC Project Team"/>
        </authorList>
    </citation>
    <scope>NUCLEOTIDE SEQUENCE [LARGE SCALE MRNA]</scope>
    <source>
        <tissue>Testis</tissue>
    </source>
</reference>
<reference key="4">
    <citation type="journal article" date="2005" name="Proc. Natl. Acad. Sci. U.S.A.">
        <title>Identification of cancer/testis-antigen genes by massively parallel signature sequencing.</title>
        <authorList>
            <person name="Chen Y.-T."/>
            <person name="Scanlan M.J."/>
            <person name="Venditti C.A."/>
            <person name="Chua R."/>
            <person name="Theiler G."/>
            <person name="Stevenson B.J."/>
            <person name="Iseli C."/>
            <person name="Gure A.O."/>
            <person name="Vasicek T."/>
            <person name="Strausberg R.L."/>
            <person name="Jongeneel C.V."/>
            <person name="Old L.J."/>
            <person name="Simpson A.J.G."/>
        </authorList>
    </citation>
    <scope>TISSUE SPECIFICITY</scope>
</reference>
<reference key="5">
    <citation type="journal article" date="2011" name="Nature">
        <title>Exome sequencing identifies frequent mutation of the SWI/SNF complex gene PBRM1 in renal carcinoma.</title>
        <authorList>
            <person name="Varela I."/>
            <person name="Tarpey P."/>
            <person name="Raine K."/>
            <person name="Huang D."/>
            <person name="Ong C.K."/>
            <person name="Stephens P."/>
            <person name="Davies H."/>
            <person name="Jones D."/>
            <person name="Lin M.L."/>
            <person name="Teague J."/>
            <person name="Bignell G."/>
            <person name="Butler A."/>
            <person name="Cho J."/>
            <person name="Dalgliesh G.L."/>
            <person name="Galappaththige D."/>
            <person name="Greenman C."/>
            <person name="Hardy C."/>
            <person name="Jia M."/>
            <person name="Latimer C."/>
            <person name="Lau K.W."/>
            <person name="Marshall J."/>
            <person name="McLaren S."/>
            <person name="Menzies A."/>
            <person name="Mudie L."/>
            <person name="Stebbings L."/>
            <person name="Largaespada D.A."/>
            <person name="Wessels L.F.A."/>
            <person name="Richard S."/>
            <person name="Kahnoski R.J."/>
            <person name="Anema J."/>
            <person name="Tuveson D.A."/>
            <person name="Perez-Mancera P.A."/>
            <person name="Mustonen V."/>
            <person name="Fischer A."/>
            <person name="Adams D.J."/>
            <person name="Rust A."/>
            <person name="Chan-On W."/>
            <person name="Subimerb C."/>
            <person name="Dykema K."/>
            <person name="Furge K."/>
            <person name="Campbell P.J."/>
            <person name="Teh B.T."/>
            <person name="Stratton M.R."/>
            <person name="Futreal P.A."/>
        </authorList>
    </citation>
    <scope>VARIANT ILE-149</scope>
</reference>
<accession>O00295</accession>
<accession>Q8TC50</accession>
<name>TULP2_HUMAN</name>
<feature type="chain" id="PRO_0000186468" description="Tubby-related protein 2">
    <location>
        <begin position="1"/>
        <end position="520"/>
    </location>
</feature>
<feature type="region of interest" description="Disordered" evidence="3">
    <location>
        <begin position="141"/>
        <end position="236"/>
    </location>
</feature>
<feature type="compositionally biased region" description="Basic and acidic residues" evidence="3">
    <location>
        <begin position="211"/>
        <end position="223"/>
    </location>
</feature>
<feature type="compositionally biased region" description="Polar residues" evidence="3">
    <location>
        <begin position="224"/>
        <end position="233"/>
    </location>
</feature>
<feature type="modified residue" description="Phosphoserine" evidence="2">
    <location>
        <position position="135"/>
    </location>
</feature>
<feature type="modified residue" description="Phosphoserine" evidence="2">
    <location>
        <position position="190"/>
    </location>
</feature>
<feature type="sequence variant" id="VAR_029312" description="In dbSNP:rs7260579.">
    <original>A</original>
    <variation>T</variation>
    <location>
        <position position="18"/>
    </location>
</feature>
<feature type="sequence variant" id="VAR_057320" description="In dbSNP:rs34378208.">
    <original>G</original>
    <variation>S</variation>
    <location>
        <position position="122"/>
    </location>
</feature>
<feature type="sequence variant" id="VAR_064760" description="Found in a renal cell carcinoma sample; somatic mutation; dbSNP:rs2037266193." evidence="5">
    <original>V</original>
    <variation>I</variation>
    <location>
        <position position="149"/>
    </location>
</feature>
<feature type="sequence variant" id="VAR_022136" description="In dbSNP:rs2270945.">
    <original>E</original>
    <variation>K</variation>
    <location>
        <position position="245"/>
    </location>
</feature>
<feature type="sequence variant" id="VAR_024679" description="In dbSNP:rs8112811.">
    <original>D</original>
    <variation>N</variation>
    <location>
        <position position="251"/>
    </location>
</feature>
<feature type="sequence conflict" description="In Ref. 1; AAB53701." evidence="7" ref="1">
    <original>H</original>
    <variation>L</variation>
    <location>
        <position position="341"/>
    </location>
</feature>